<reference key="1">
    <citation type="journal article" date="2003" name="Proc. Natl. Acad. Sci. U.S.A.">
        <title>Reductive genome evolution in Buchnera aphidicola.</title>
        <authorList>
            <person name="van Ham R.C.H.J."/>
            <person name="Kamerbeek J."/>
            <person name="Palacios C."/>
            <person name="Rausell C."/>
            <person name="Abascal F."/>
            <person name="Bastolla U."/>
            <person name="Fernandez J.M."/>
            <person name="Jimenez L."/>
            <person name="Postigo M."/>
            <person name="Silva F.J."/>
            <person name="Tamames J."/>
            <person name="Viguera E."/>
            <person name="Latorre A."/>
            <person name="Valencia A."/>
            <person name="Moran F."/>
            <person name="Moya A."/>
        </authorList>
    </citation>
    <scope>NUCLEOTIDE SEQUENCE [LARGE SCALE GENOMIC DNA]</scope>
    <source>
        <strain>Bp</strain>
    </source>
</reference>
<organism>
    <name type="scientific">Buchnera aphidicola subsp. Baizongia pistaciae (strain Bp)</name>
    <dbReference type="NCBI Taxonomy" id="224915"/>
    <lineage>
        <taxon>Bacteria</taxon>
        <taxon>Pseudomonadati</taxon>
        <taxon>Pseudomonadota</taxon>
        <taxon>Gammaproteobacteria</taxon>
        <taxon>Enterobacterales</taxon>
        <taxon>Erwiniaceae</taxon>
        <taxon>Buchnera</taxon>
    </lineage>
</organism>
<accession>Q89AR7</accession>
<gene>
    <name type="primary">sodA</name>
    <name type="ordered locus">bbp_178</name>
</gene>
<keyword id="KW-0464">Manganese</keyword>
<keyword id="KW-0479">Metal-binding</keyword>
<keyword id="KW-0560">Oxidoreductase</keyword>
<keyword id="KW-1185">Reference proteome</keyword>
<protein>
    <recommendedName>
        <fullName>Superoxide dismutase [Mn]</fullName>
        <ecNumber>1.15.1.1</ecNumber>
    </recommendedName>
</protein>
<dbReference type="EC" id="1.15.1.1"/>
<dbReference type="EMBL" id="AE016826">
    <property type="protein sequence ID" value="AAO26910.1"/>
    <property type="molecule type" value="Genomic_DNA"/>
</dbReference>
<dbReference type="RefSeq" id="WP_011091311.1">
    <property type="nucleotide sequence ID" value="NC_004545.1"/>
</dbReference>
<dbReference type="SMR" id="Q89AR7"/>
<dbReference type="STRING" id="224915.bbp_178"/>
<dbReference type="KEGG" id="bab:bbp_178"/>
<dbReference type="eggNOG" id="COG0605">
    <property type="taxonomic scope" value="Bacteria"/>
</dbReference>
<dbReference type="HOGENOM" id="CLU_031625_0_1_6"/>
<dbReference type="OrthoDB" id="9803125at2"/>
<dbReference type="Proteomes" id="UP000000601">
    <property type="component" value="Chromosome"/>
</dbReference>
<dbReference type="GO" id="GO:0005737">
    <property type="term" value="C:cytoplasm"/>
    <property type="evidence" value="ECO:0007669"/>
    <property type="project" value="TreeGrafter"/>
</dbReference>
<dbReference type="GO" id="GO:0046872">
    <property type="term" value="F:metal ion binding"/>
    <property type="evidence" value="ECO:0007669"/>
    <property type="project" value="UniProtKB-KW"/>
</dbReference>
<dbReference type="GO" id="GO:0004784">
    <property type="term" value="F:superoxide dismutase activity"/>
    <property type="evidence" value="ECO:0007669"/>
    <property type="project" value="UniProtKB-EC"/>
</dbReference>
<dbReference type="Gene3D" id="1.10.287.990">
    <property type="entry name" value="Fe,Mn superoxide dismutase (SOD) domain"/>
    <property type="match status" value="1"/>
</dbReference>
<dbReference type="Gene3D" id="3.55.40.20">
    <property type="entry name" value="Iron/manganese superoxide dismutase, C-terminal domain"/>
    <property type="match status" value="1"/>
</dbReference>
<dbReference type="InterPro" id="IPR001189">
    <property type="entry name" value="Mn/Fe_SOD"/>
</dbReference>
<dbReference type="InterPro" id="IPR019833">
    <property type="entry name" value="Mn/Fe_SOD_BS"/>
</dbReference>
<dbReference type="InterPro" id="IPR019832">
    <property type="entry name" value="Mn/Fe_SOD_C"/>
</dbReference>
<dbReference type="InterPro" id="IPR019831">
    <property type="entry name" value="Mn/Fe_SOD_N"/>
</dbReference>
<dbReference type="InterPro" id="IPR036324">
    <property type="entry name" value="Mn/Fe_SOD_N_sf"/>
</dbReference>
<dbReference type="InterPro" id="IPR036314">
    <property type="entry name" value="SOD_C_sf"/>
</dbReference>
<dbReference type="PANTHER" id="PTHR43595">
    <property type="entry name" value="37S RIBOSOMAL PROTEIN S26, MITOCHONDRIAL"/>
    <property type="match status" value="1"/>
</dbReference>
<dbReference type="PANTHER" id="PTHR43595:SF2">
    <property type="entry name" value="SMALL RIBOSOMAL SUBUNIT PROTEIN MS42"/>
    <property type="match status" value="1"/>
</dbReference>
<dbReference type="Pfam" id="PF02777">
    <property type="entry name" value="Sod_Fe_C"/>
    <property type="match status" value="1"/>
</dbReference>
<dbReference type="Pfam" id="PF00081">
    <property type="entry name" value="Sod_Fe_N"/>
    <property type="match status" value="1"/>
</dbReference>
<dbReference type="PIRSF" id="PIRSF000349">
    <property type="entry name" value="SODismutase"/>
    <property type="match status" value="1"/>
</dbReference>
<dbReference type="PRINTS" id="PR01703">
    <property type="entry name" value="MNSODISMTASE"/>
</dbReference>
<dbReference type="SUPFAM" id="SSF54719">
    <property type="entry name" value="Fe,Mn superoxide dismutase (SOD), C-terminal domain"/>
    <property type="match status" value="1"/>
</dbReference>
<dbReference type="SUPFAM" id="SSF46609">
    <property type="entry name" value="Fe,Mn superoxide dismutase (SOD), N-terminal domain"/>
    <property type="match status" value="1"/>
</dbReference>
<dbReference type="PROSITE" id="PS00088">
    <property type="entry name" value="SOD_MN"/>
    <property type="match status" value="1"/>
</dbReference>
<proteinExistence type="inferred from homology"/>
<name>SODM_BUCBP</name>
<evidence type="ECO:0000250" key="1"/>
<evidence type="ECO:0000305" key="2"/>
<sequence>MTYVLPSLPYSYNSLEPFFDEKTMIIHHTRHHQAYINNTNSILNGTHYENLLIEELISKLNILSIENKLALQNNAGGHINHSLFWKWLKLNTILKDDFKIILEKNFKSVDFFKKQFEKIALSHFGSGWIWLIKKYDNTLRIVTTVNQNTPLMGKEISGISGIPILGLDLWEHAYYLKYKNNRSDYVNAFWNVVNWDEVSYRFFNISNM</sequence>
<comment type="function">
    <text>Destroys superoxide anion radicals which are normally produced within the cells and which are toxic to biological systems.</text>
</comment>
<comment type="catalytic activity">
    <reaction>
        <text>2 superoxide + 2 H(+) = H2O2 + O2</text>
        <dbReference type="Rhea" id="RHEA:20696"/>
        <dbReference type="ChEBI" id="CHEBI:15378"/>
        <dbReference type="ChEBI" id="CHEBI:15379"/>
        <dbReference type="ChEBI" id="CHEBI:16240"/>
        <dbReference type="ChEBI" id="CHEBI:18421"/>
        <dbReference type="EC" id="1.15.1.1"/>
    </reaction>
</comment>
<comment type="cofactor">
    <cofactor evidence="1">
        <name>Mn(2+)</name>
        <dbReference type="ChEBI" id="CHEBI:29035"/>
    </cofactor>
    <text evidence="1">Binds 1 Mn(2+) ion per subunit.</text>
</comment>
<comment type="subunit">
    <text evidence="1">Homodimer.</text>
</comment>
<comment type="similarity">
    <text evidence="2">Belongs to the iron/manganese superoxide dismutase family.</text>
</comment>
<feature type="chain" id="PRO_0000160024" description="Superoxide dismutase [Mn]">
    <location>
        <begin position="1"/>
        <end position="208"/>
    </location>
</feature>
<feature type="binding site" evidence="1">
    <location>
        <position position="27"/>
    </location>
    <ligand>
        <name>Mn(2+)</name>
        <dbReference type="ChEBI" id="CHEBI:29035"/>
    </ligand>
</feature>
<feature type="binding site" evidence="1">
    <location>
        <position position="81"/>
    </location>
    <ligand>
        <name>Mn(2+)</name>
        <dbReference type="ChEBI" id="CHEBI:29035"/>
    </ligand>
</feature>
<feature type="binding site" evidence="1">
    <location>
        <position position="168"/>
    </location>
    <ligand>
        <name>Mn(2+)</name>
        <dbReference type="ChEBI" id="CHEBI:29035"/>
    </ligand>
</feature>
<feature type="binding site" evidence="1">
    <location>
        <position position="172"/>
    </location>
    <ligand>
        <name>Mn(2+)</name>
        <dbReference type="ChEBI" id="CHEBI:29035"/>
    </ligand>
</feature>